<organism>
    <name type="scientific">Staphylococcus saprophyticus subsp. saprophyticus (strain ATCC 15305 / DSM 20229 / NCIMB 8711 / NCTC 7292 / S-41)</name>
    <dbReference type="NCBI Taxonomy" id="342451"/>
    <lineage>
        <taxon>Bacteria</taxon>
        <taxon>Bacillati</taxon>
        <taxon>Bacillota</taxon>
        <taxon>Bacilli</taxon>
        <taxon>Bacillales</taxon>
        <taxon>Staphylococcaceae</taxon>
        <taxon>Staphylococcus</taxon>
    </lineage>
</organism>
<dbReference type="EMBL" id="AP008934">
    <property type="protein sequence ID" value="BAE17992.1"/>
    <property type="molecule type" value="Genomic_DNA"/>
</dbReference>
<dbReference type="RefSeq" id="WP_002482789.1">
    <property type="nucleotide sequence ID" value="NZ_MTGA01000031.1"/>
</dbReference>
<dbReference type="SMR" id="Q49YY6"/>
<dbReference type="GeneID" id="66867007"/>
<dbReference type="KEGG" id="ssp:SSP0847"/>
<dbReference type="eggNOG" id="COG0234">
    <property type="taxonomic scope" value="Bacteria"/>
</dbReference>
<dbReference type="HOGENOM" id="CLU_132825_2_1_9"/>
<dbReference type="OrthoDB" id="9806791at2"/>
<dbReference type="Proteomes" id="UP000006371">
    <property type="component" value="Chromosome"/>
</dbReference>
<dbReference type="GO" id="GO:0005737">
    <property type="term" value="C:cytoplasm"/>
    <property type="evidence" value="ECO:0007669"/>
    <property type="project" value="UniProtKB-SubCell"/>
</dbReference>
<dbReference type="GO" id="GO:0005524">
    <property type="term" value="F:ATP binding"/>
    <property type="evidence" value="ECO:0007669"/>
    <property type="project" value="InterPro"/>
</dbReference>
<dbReference type="GO" id="GO:0046872">
    <property type="term" value="F:metal ion binding"/>
    <property type="evidence" value="ECO:0007669"/>
    <property type="project" value="TreeGrafter"/>
</dbReference>
<dbReference type="GO" id="GO:0044183">
    <property type="term" value="F:protein folding chaperone"/>
    <property type="evidence" value="ECO:0007669"/>
    <property type="project" value="InterPro"/>
</dbReference>
<dbReference type="GO" id="GO:0051087">
    <property type="term" value="F:protein-folding chaperone binding"/>
    <property type="evidence" value="ECO:0007669"/>
    <property type="project" value="TreeGrafter"/>
</dbReference>
<dbReference type="GO" id="GO:0051082">
    <property type="term" value="F:unfolded protein binding"/>
    <property type="evidence" value="ECO:0007669"/>
    <property type="project" value="TreeGrafter"/>
</dbReference>
<dbReference type="GO" id="GO:0051085">
    <property type="term" value="P:chaperone cofactor-dependent protein refolding"/>
    <property type="evidence" value="ECO:0007669"/>
    <property type="project" value="TreeGrafter"/>
</dbReference>
<dbReference type="CDD" id="cd00320">
    <property type="entry name" value="cpn10"/>
    <property type="match status" value="1"/>
</dbReference>
<dbReference type="FunFam" id="2.30.33.40:FF:000001">
    <property type="entry name" value="10 kDa chaperonin"/>
    <property type="match status" value="1"/>
</dbReference>
<dbReference type="Gene3D" id="2.30.33.40">
    <property type="entry name" value="GroES chaperonin"/>
    <property type="match status" value="1"/>
</dbReference>
<dbReference type="HAMAP" id="MF_00580">
    <property type="entry name" value="CH10"/>
    <property type="match status" value="1"/>
</dbReference>
<dbReference type="InterPro" id="IPR020818">
    <property type="entry name" value="Chaperonin_GroES"/>
</dbReference>
<dbReference type="InterPro" id="IPR037124">
    <property type="entry name" value="Chaperonin_GroES_sf"/>
</dbReference>
<dbReference type="InterPro" id="IPR018369">
    <property type="entry name" value="Chaprnonin_Cpn10_CS"/>
</dbReference>
<dbReference type="InterPro" id="IPR011032">
    <property type="entry name" value="GroES-like_sf"/>
</dbReference>
<dbReference type="NCBIfam" id="NF001531">
    <property type="entry name" value="PRK00364.2-2"/>
    <property type="match status" value="1"/>
</dbReference>
<dbReference type="NCBIfam" id="NF001532">
    <property type="entry name" value="PRK00364.2-3"/>
    <property type="match status" value="1"/>
</dbReference>
<dbReference type="NCBIfam" id="NF001533">
    <property type="entry name" value="PRK00364.2-4"/>
    <property type="match status" value="1"/>
</dbReference>
<dbReference type="NCBIfam" id="NF001534">
    <property type="entry name" value="PRK00364.2-5"/>
    <property type="match status" value="1"/>
</dbReference>
<dbReference type="PANTHER" id="PTHR10772">
    <property type="entry name" value="10 KDA HEAT SHOCK PROTEIN"/>
    <property type="match status" value="1"/>
</dbReference>
<dbReference type="PANTHER" id="PTHR10772:SF58">
    <property type="entry name" value="CO-CHAPERONIN GROES"/>
    <property type="match status" value="1"/>
</dbReference>
<dbReference type="Pfam" id="PF00166">
    <property type="entry name" value="Cpn10"/>
    <property type="match status" value="1"/>
</dbReference>
<dbReference type="PRINTS" id="PR00297">
    <property type="entry name" value="CHAPERONIN10"/>
</dbReference>
<dbReference type="SMART" id="SM00883">
    <property type="entry name" value="Cpn10"/>
    <property type="match status" value="1"/>
</dbReference>
<dbReference type="SUPFAM" id="SSF50129">
    <property type="entry name" value="GroES-like"/>
    <property type="match status" value="1"/>
</dbReference>
<dbReference type="PROSITE" id="PS00681">
    <property type="entry name" value="CHAPERONINS_CPN10"/>
    <property type="match status" value="1"/>
</dbReference>
<keyword id="KW-0143">Chaperone</keyword>
<keyword id="KW-0963">Cytoplasm</keyword>
<keyword id="KW-1185">Reference proteome</keyword>
<protein>
    <recommendedName>
        <fullName evidence="1">Co-chaperonin GroES</fullName>
    </recommendedName>
    <alternativeName>
        <fullName evidence="1">10 kDa chaperonin</fullName>
    </alternativeName>
    <alternativeName>
        <fullName evidence="1">Chaperonin-10</fullName>
        <shortName evidence="1">Cpn10</shortName>
    </alternativeName>
</protein>
<feature type="chain" id="PRO_0000174850" description="Co-chaperonin GroES">
    <location>
        <begin position="1"/>
        <end position="95"/>
    </location>
</feature>
<comment type="function">
    <text evidence="1">Together with the chaperonin GroEL, plays an essential role in assisting protein folding. The GroEL-GroES system forms a nano-cage that allows encapsulation of the non-native substrate proteins and provides a physical environment optimized to promote and accelerate protein folding. GroES binds to the apical surface of the GroEL ring, thereby capping the opening of the GroEL channel.</text>
</comment>
<comment type="subunit">
    <text evidence="1">Heptamer of 7 subunits arranged in a ring. Interacts with the chaperonin GroEL.</text>
</comment>
<comment type="subcellular location">
    <subcellularLocation>
        <location evidence="1">Cytoplasm</location>
    </subcellularLocation>
</comment>
<comment type="similarity">
    <text evidence="1">Belongs to the GroES chaperonin family.</text>
</comment>
<accession>Q49YY6</accession>
<reference key="1">
    <citation type="journal article" date="2005" name="Proc. Natl. Acad. Sci. U.S.A.">
        <title>Whole genome sequence of Staphylococcus saprophyticus reveals the pathogenesis of uncomplicated urinary tract infection.</title>
        <authorList>
            <person name="Kuroda M."/>
            <person name="Yamashita A."/>
            <person name="Hirakawa H."/>
            <person name="Kumano M."/>
            <person name="Morikawa K."/>
            <person name="Higashide M."/>
            <person name="Maruyama A."/>
            <person name="Inose Y."/>
            <person name="Matoba K."/>
            <person name="Toh H."/>
            <person name="Kuhara S."/>
            <person name="Hattori M."/>
            <person name="Ohta T."/>
        </authorList>
    </citation>
    <scope>NUCLEOTIDE SEQUENCE [LARGE SCALE GENOMIC DNA]</scope>
    <source>
        <strain>ATCC 15305 / DSM 20229 / NCIMB 8711 / NCTC 7292 / S-41</strain>
    </source>
</reference>
<proteinExistence type="inferred from homology"/>
<gene>
    <name evidence="1" type="primary">groES</name>
    <name evidence="1" type="synonym">groS</name>
    <name type="ordered locus">SSP0847</name>
</gene>
<name>CH10_STAS1</name>
<evidence type="ECO:0000255" key="1">
    <source>
        <dbReference type="HAMAP-Rule" id="MF_00580"/>
    </source>
</evidence>
<sequence>MLKPLGNRVIIQKSEQEQTTKSGIVLTDSAKEKSNEGTIIAVGAGRILKDGSRVAPEVNEGDKVVFQQYAGTEVKRGDETYLIVNEEDILAIIES</sequence>